<comment type="similarity">
    <text evidence="1">Belongs to the UPF0248 family.</text>
</comment>
<proteinExistence type="inferred from homology"/>
<feature type="chain" id="PRO_1000214096" description="UPF0248 protein M1425_2629">
    <location>
        <begin position="1"/>
        <end position="80"/>
    </location>
</feature>
<dbReference type="EMBL" id="CP001400">
    <property type="protein sequence ID" value="ACP39338.1"/>
    <property type="molecule type" value="Genomic_DNA"/>
</dbReference>
<dbReference type="RefSeq" id="WP_012712542.1">
    <property type="nucleotide sequence ID" value="NC_012588.1"/>
</dbReference>
<dbReference type="KEGG" id="sia:M1425_2629"/>
<dbReference type="HOGENOM" id="CLU_172276_0_0_2"/>
<dbReference type="Proteomes" id="UP000001350">
    <property type="component" value="Chromosome"/>
</dbReference>
<dbReference type="HAMAP" id="MF_01245">
    <property type="entry name" value="UPF0248"/>
    <property type="match status" value="1"/>
</dbReference>
<dbReference type="InterPro" id="IPR040459">
    <property type="entry name" value="MJ1316"/>
</dbReference>
<dbReference type="InterPro" id="IPR007547">
    <property type="entry name" value="UPF0248"/>
</dbReference>
<dbReference type="Pfam" id="PF04457">
    <property type="entry name" value="MJ1316"/>
    <property type="match status" value="1"/>
</dbReference>
<evidence type="ECO:0000255" key="1">
    <source>
        <dbReference type="HAMAP-Rule" id="MF_01245"/>
    </source>
</evidence>
<gene>
    <name type="ordered locus">M1425_2629</name>
</gene>
<organism>
    <name type="scientific">Saccharolobus islandicus (strain M.14.25 / Kamchatka #1)</name>
    <name type="common">Sulfolobus islandicus</name>
    <dbReference type="NCBI Taxonomy" id="427317"/>
    <lineage>
        <taxon>Archaea</taxon>
        <taxon>Thermoproteota</taxon>
        <taxon>Thermoprotei</taxon>
        <taxon>Sulfolobales</taxon>
        <taxon>Sulfolobaceae</taxon>
        <taxon>Saccharolobus</taxon>
    </lineage>
</organism>
<name>Y2629_SACI4</name>
<reference key="1">
    <citation type="journal article" date="2009" name="Proc. Natl. Acad. Sci. U.S.A.">
        <title>Biogeography of the Sulfolobus islandicus pan-genome.</title>
        <authorList>
            <person name="Reno M.L."/>
            <person name="Held N.L."/>
            <person name="Fields C.J."/>
            <person name="Burke P.V."/>
            <person name="Whitaker R.J."/>
        </authorList>
    </citation>
    <scope>NUCLEOTIDE SEQUENCE [LARGE SCALE GENOMIC DNA]</scope>
    <source>
        <strain>M.14.25 / Kamchatka #1</strain>
    </source>
</reference>
<protein>
    <recommendedName>
        <fullName evidence="1">UPF0248 protein M1425_2629</fullName>
    </recommendedName>
</protein>
<sequence length="80" mass="9670">MKIKDAVNMIRWKYREKIDDYVVIIIDRLTENGLKEISFSEIDDVDNNYLYLKSEENTVIPLHRVLMIKRKSDNALIWKR</sequence>
<accession>C3MT45</accession>